<dbReference type="EMBL" id="U00089">
    <property type="protein sequence ID" value="AAB95866.1"/>
    <property type="molecule type" value="Genomic_DNA"/>
</dbReference>
<dbReference type="PIR" id="S73544">
    <property type="entry name" value="S73544"/>
</dbReference>
<dbReference type="RefSeq" id="NP_110313.1">
    <property type="nucleotide sequence ID" value="NC_000912.1"/>
</dbReference>
<dbReference type="RefSeq" id="WP_010874981.1">
    <property type="nucleotide sequence ID" value="NZ_OU342337.1"/>
</dbReference>
<dbReference type="PDB" id="7OOD">
    <property type="method" value="EM"/>
    <property type="resolution" value="3.40 A"/>
    <property type="chains" value="v=1-65"/>
</dbReference>
<dbReference type="PDB" id="7P6Z">
    <property type="method" value="EM"/>
    <property type="resolution" value="3.50 A"/>
    <property type="chains" value="v=1-65"/>
</dbReference>
<dbReference type="PDB" id="7PAH">
    <property type="method" value="EM"/>
    <property type="resolution" value="9.50 A"/>
    <property type="chains" value="v=1-65"/>
</dbReference>
<dbReference type="PDB" id="7PAI">
    <property type="method" value="EM"/>
    <property type="resolution" value="6.70 A"/>
    <property type="chains" value="v=1-65"/>
</dbReference>
<dbReference type="PDB" id="7PAJ">
    <property type="method" value="EM"/>
    <property type="resolution" value="7.30 A"/>
    <property type="chains" value="v=1-65"/>
</dbReference>
<dbReference type="PDB" id="7PAK">
    <property type="method" value="EM"/>
    <property type="resolution" value="5.30 A"/>
    <property type="chains" value="v=1-65"/>
</dbReference>
<dbReference type="PDB" id="7PAL">
    <property type="method" value="EM"/>
    <property type="resolution" value="4.70 A"/>
    <property type="chains" value="v=1-65"/>
</dbReference>
<dbReference type="PDB" id="7PAM">
    <property type="method" value="EM"/>
    <property type="resolution" value="6.80 A"/>
    <property type="chains" value="v=1-65"/>
</dbReference>
<dbReference type="PDB" id="7PAN">
    <property type="method" value="EM"/>
    <property type="resolution" value="9.70 A"/>
    <property type="chains" value="v=1-65"/>
</dbReference>
<dbReference type="PDB" id="7PAO">
    <property type="method" value="EM"/>
    <property type="resolution" value="7.00 A"/>
    <property type="chains" value="v=1-65"/>
</dbReference>
<dbReference type="PDB" id="7PAQ">
    <property type="method" value="EM"/>
    <property type="resolution" value="8.90 A"/>
    <property type="chains" value="v=1-65"/>
</dbReference>
<dbReference type="PDB" id="7PAR">
    <property type="method" value="EM"/>
    <property type="resolution" value="8.20 A"/>
    <property type="chains" value="v=1-65"/>
</dbReference>
<dbReference type="PDB" id="7PAS">
    <property type="method" value="EM"/>
    <property type="resolution" value="16.00 A"/>
    <property type="chains" value="v=1-65"/>
</dbReference>
<dbReference type="PDB" id="7PAT">
    <property type="method" value="EM"/>
    <property type="resolution" value="9.20 A"/>
    <property type="chains" value="v=1-65"/>
</dbReference>
<dbReference type="PDB" id="7PAU">
    <property type="method" value="EM"/>
    <property type="resolution" value="8.30 A"/>
    <property type="chains" value="v=1-65"/>
</dbReference>
<dbReference type="PDB" id="7PH9">
    <property type="method" value="EM"/>
    <property type="resolution" value="8.70 A"/>
    <property type="chains" value="v=1-65"/>
</dbReference>
<dbReference type="PDB" id="7PHA">
    <property type="method" value="EM"/>
    <property type="resolution" value="8.50 A"/>
    <property type="chains" value="v=1-65"/>
</dbReference>
<dbReference type="PDB" id="7PHB">
    <property type="method" value="EM"/>
    <property type="resolution" value="4.90 A"/>
    <property type="chains" value="v=1-65"/>
</dbReference>
<dbReference type="PDB" id="7PHC">
    <property type="method" value="EM"/>
    <property type="resolution" value="9.90 A"/>
    <property type="chains" value="v=1-65"/>
</dbReference>
<dbReference type="PDB" id="7PI8">
    <property type="method" value="EM"/>
    <property type="resolution" value="8.90 A"/>
    <property type="chains" value="v=1-65"/>
</dbReference>
<dbReference type="PDB" id="7PI9">
    <property type="method" value="EM"/>
    <property type="resolution" value="6.30 A"/>
    <property type="chains" value="v=1-65"/>
</dbReference>
<dbReference type="PDB" id="7PIA">
    <property type="method" value="EM"/>
    <property type="resolution" value="13.60 A"/>
    <property type="chains" value="v=1-65"/>
</dbReference>
<dbReference type="PDB" id="7PIB">
    <property type="method" value="EM"/>
    <property type="resolution" value="4.70 A"/>
    <property type="chains" value="v=1-65"/>
</dbReference>
<dbReference type="PDB" id="7PIC">
    <property type="method" value="EM"/>
    <property type="resolution" value="9.10 A"/>
    <property type="chains" value="v=1-65"/>
</dbReference>
<dbReference type="PDB" id="7PIO">
    <property type="method" value="EM"/>
    <property type="resolution" value="9.50 A"/>
    <property type="chains" value="v=1-65"/>
</dbReference>
<dbReference type="PDB" id="7PIP">
    <property type="method" value="EM"/>
    <property type="resolution" value="9.30 A"/>
    <property type="chains" value="v=1-65"/>
</dbReference>
<dbReference type="PDB" id="7PIQ">
    <property type="method" value="EM"/>
    <property type="resolution" value="9.70 A"/>
    <property type="chains" value="v=1-65"/>
</dbReference>
<dbReference type="PDB" id="7PIR">
    <property type="method" value="EM"/>
    <property type="resolution" value="12.10 A"/>
    <property type="chains" value="v=1-65"/>
</dbReference>
<dbReference type="PDB" id="7PIS">
    <property type="method" value="EM"/>
    <property type="resolution" value="15.00 A"/>
    <property type="chains" value="v=1-65"/>
</dbReference>
<dbReference type="PDB" id="7PIT">
    <property type="method" value="EM"/>
    <property type="resolution" value="5.70 A"/>
    <property type="chains" value="v=1-65"/>
</dbReference>
<dbReference type="PDB" id="8P7X">
    <property type="method" value="EM"/>
    <property type="resolution" value="3.03 A"/>
    <property type="chains" value="v=1-65"/>
</dbReference>
<dbReference type="PDB" id="8P7Y">
    <property type="method" value="EM"/>
    <property type="resolution" value="3.70 A"/>
    <property type="chains" value="v=1-65"/>
</dbReference>
<dbReference type="PDB" id="8P8B">
    <property type="method" value="EM"/>
    <property type="resolution" value="2.90 A"/>
    <property type="chains" value="v=1-65"/>
</dbReference>
<dbReference type="PDB" id="8P8V">
    <property type="method" value="EM"/>
    <property type="resolution" value="8.70 A"/>
    <property type="chains" value="v=1-65"/>
</dbReference>
<dbReference type="PDB" id="8P8W">
    <property type="method" value="EM"/>
    <property type="resolution" value="8.70 A"/>
    <property type="chains" value="v=1-65"/>
</dbReference>
<dbReference type="PDBsum" id="7OOD"/>
<dbReference type="PDBsum" id="7P6Z"/>
<dbReference type="PDBsum" id="7PAH"/>
<dbReference type="PDBsum" id="7PAI"/>
<dbReference type="PDBsum" id="7PAJ"/>
<dbReference type="PDBsum" id="7PAK"/>
<dbReference type="PDBsum" id="7PAL"/>
<dbReference type="PDBsum" id="7PAM"/>
<dbReference type="PDBsum" id="7PAN"/>
<dbReference type="PDBsum" id="7PAO"/>
<dbReference type="PDBsum" id="7PAQ"/>
<dbReference type="PDBsum" id="7PAR"/>
<dbReference type="PDBsum" id="7PAS"/>
<dbReference type="PDBsum" id="7PAT"/>
<dbReference type="PDBsum" id="7PAU"/>
<dbReference type="PDBsum" id="7PH9"/>
<dbReference type="PDBsum" id="7PHA"/>
<dbReference type="PDBsum" id="7PHB"/>
<dbReference type="PDBsum" id="7PHC"/>
<dbReference type="PDBsum" id="7PI8"/>
<dbReference type="PDBsum" id="7PI9"/>
<dbReference type="PDBsum" id="7PIA"/>
<dbReference type="PDBsum" id="7PIB"/>
<dbReference type="PDBsum" id="7PIC"/>
<dbReference type="PDBsum" id="7PIO"/>
<dbReference type="PDBsum" id="7PIP"/>
<dbReference type="PDBsum" id="7PIQ"/>
<dbReference type="PDBsum" id="7PIR"/>
<dbReference type="PDBsum" id="7PIS"/>
<dbReference type="PDBsum" id="7PIT"/>
<dbReference type="PDBsum" id="8P7X"/>
<dbReference type="PDBsum" id="8P7Y"/>
<dbReference type="PDBsum" id="8P8B"/>
<dbReference type="PDBsum" id="8P8V"/>
<dbReference type="PDBsum" id="8P8W"/>
<dbReference type="EMDB" id="EMD-13234"/>
<dbReference type="EMDB" id="EMD-13272"/>
<dbReference type="EMDB" id="EMD-13273"/>
<dbReference type="EMDB" id="EMD-13274"/>
<dbReference type="EMDB" id="EMD-13275"/>
<dbReference type="EMDB" id="EMD-13276"/>
<dbReference type="EMDB" id="EMD-13277"/>
<dbReference type="EMDB" id="EMD-13278"/>
<dbReference type="EMDB" id="EMD-13279"/>
<dbReference type="EMDB" id="EMD-13280"/>
<dbReference type="EMDB" id="EMD-13281"/>
<dbReference type="EMDB" id="EMD-13282"/>
<dbReference type="EMDB" id="EMD-13285"/>
<dbReference type="EMDB" id="EMD-13286"/>
<dbReference type="EMDB" id="EMD-13410"/>
<dbReference type="EMDB" id="EMD-13411"/>
<dbReference type="EMDB" id="EMD-13412"/>
<dbReference type="EMDB" id="EMD-13413"/>
<dbReference type="EMDB" id="EMD-13432"/>
<dbReference type="EMDB" id="EMD-13433"/>
<dbReference type="EMDB" id="EMD-13434"/>
<dbReference type="EMDB" id="EMD-13435"/>
<dbReference type="EMDB" id="EMD-13436"/>
<dbReference type="EMDB" id="EMD-13445"/>
<dbReference type="EMDB" id="EMD-13446"/>
<dbReference type="EMDB" id="EMD-13447"/>
<dbReference type="EMDB" id="EMD-13448"/>
<dbReference type="EMDB" id="EMD-13449"/>
<dbReference type="EMDB" id="EMD-13450"/>
<dbReference type="SMR" id="P75171"/>
<dbReference type="STRING" id="272634.MPN_624"/>
<dbReference type="EnsemblBacteria" id="AAB95866">
    <property type="protein sequence ID" value="AAB95866"/>
    <property type="gene ID" value="MPN_624"/>
</dbReference>
<dbReference type="GeneID" id="66608690"/>
<dbReference type="KEGG" id="mpn:MPN_624"/>
<dbReference type="PATRIC" id="fig|272634.6.peg.688"/>
<dbReference type="HOGENOM" id="CLU_064548_7_2_14"/>
<dbReference type="OrthoDB" id="9805609at2"/>
<dbReference type="BioCyc" id="MPNE272634:G1GJ3-1004-MONOMER"/>
<dbReference type="Proteomes" id="UP000000808">
    <property type="component" value="Chromosome"/>
</dbReference>
<dbReference type="GO" id="GO:1990904">
    <property type="term" value="C:ribonucleoprotein complex"/>
    <property type="evidence" value="ECO:0007669"/>
    <property type="project" value="UniProtKB-KW"/>
</dbReference>
<dbReference type="GO" id="GO:0005840">
    <property type="term" value="C:ribosome"/>
    <property type="evidence" value="ECO:0007669"/>
    <property type="project" value="UniProtKB-KW"/>
</dbReference>
<dbReference type="GO" id="GO:0003735">
    <property type="term" value="F:structural constituent of ribosome"/>
    <property type="evidence" value="ECO:0007669"/>
    <property type="project" value="InterPro"/>
</dbReference>
<dbReference type="GO" id="GO:0006412">
    <property type="term" value="P:translation"/>
    <property type="evidence" value="ECO:0007669"/>
    <property type="project" value="UniProtKB-UniRule"/>
</dbReference>
<dbReference type="Gene3D" id="2.30.170.40">
    <property type="entry name" value="Ribosomal protein L28/L24"/>
    <property type="match status" value="1"/>
</dbReference>
<dbReference type="HAMAP" id="MF_00373">
    <property type="entry name" value="Ribosomal_bL28"/>
    <property type="match status" value="1"/>
</dbReference>
<dbReference type="InterPro" id="IPR050096">
    <property type="entry name" value="Bacterial_rp_bL28"/>
</dbReference>
<dbReference type="InterPro" id="IPR026569">
    <property type="entry name" value="Ribosomal_bL28"/>
</dbReference>
<dbReference type="InterPro" id="IPR034704">
    <property type="entry name" value="Ribosomal_bL28/bL31-like_sf"/>
</dbReference>
<dbReference type="InterPro" id="IPR001383">
    <property type="entry name" value="Ribosomal_bL28_bact-type"/>
</dbReference>
<dbReference type="InterPro" id="IPR037147">
    <property type="entry name" value="Ribosomal_bL28_sf"/>
</dbReference>
<dbReference type="NCBIfam" id="TIGR00009">
    <property type="entry name" value="L28"/>
    <property type="match status" value="1"/>
</dbReference>
<dbReference type="PANTHER" id="PTHR39080">
    <property type="entry name" value="50S RIBOSOMAL PROTEIN L28"/>
    <property type="match status" value="1"/>
</dbReference>
<dbReference type="PANTHER" id="PTHR39080:SF1">
    <property type="entry name" value="LARGE RIBOSOMAL SUBUNIT PROTEIN BL28A"/>
    <property type="match status" value="1"/>
</dbReference>
<dbReference type="Pfam" id="PF00830">
    <property type="entry name" value="Ribosomal_L28"/>
    <property type="match status" value="1"/>
</dbReference>
<dbReference type="SUPFAM" id="SSF143800">
    <property type="entry name" value="L28p-like"/>
    <property type="match status" value="1"/>
</dbReference>
<organism>
    <name type="scientific">Mycoplasma pneumoniae (strain ATCC 29342 / M129 / Subtype 1)</name>
    <name type="common">Mycoplasmoides pneumoniae</name>
    <dbReference type="NCBI Taxonomy" id="272634"/>
    <lineage>
        <taxon>Bacteria</taxon>
        <taxon>Bacillati</taxon>
        <taxon>Mycoplasmatota</taxon>
        <taxon>Mycoplasmoidales</taxon>
        <taxon>Mycoplasmoidaceae</taxon>
        <taxon>Mycoplasmoides</taxon>
    </lineage>
</organism>
<name>RL28_MYCPN</name>
<proteinExistence type="evidence at protein level"/>
<keyword id="KW-0002">3D-structure</keyword>
<keyword id="KW-1185">Reference proteome</keyword>
<keyword id="KW-0687">Ribonucleoprotein</keyword>
<keyword id="KW-0689">Ribosomal protein</keyword>
<sequence>MAKKDQLTLRGPLYGNNRSHSKTITRRKWNVNLQPCKVKTADGKTTRILVSTRTLRTLKKHNRLS</sequence>
<evidence type="ECO:0000255" key="1">
    <source>
        <dbReference type="HAMAP-Rule" id="MF_00373"/>
    </source>
</evidence>
<evidence type="ECO:0000256" key="2">
    <source>
        <dbReference type="SAM" id="MobiDB-lite"/>
    </source>
</evidence>
<evidence type="ECO:0000305" key="3"/>
<evidence type="ECO:0007829" key="4">
    <source>
        <dbReference type="PDB" id="7OOD"/>
    </source>
</evidence>
<evidence type="ECO:0007829" key="5">
    <source>
        <dbReference type="PDB" id="8P8B"/>
    </source>
</evidence>
<protein>
    <recommendedName>
        <fullName evidence="1">Large ribosomal subunit protein bL28</fullName>
    </recommendedName>
    <alternativeName>
        <fullName evidence="3">50S ribosomal protein L28</fullName>
    </alternativeName>
</protein>
<accession>P75171</accession>
<feature type="chain" id="PRO_0000178510" description="Large ribosomal subunit protein bL28">
    <location>
        <begin position="1"/>
        <end position="65"/>
    </location>
</feature>
<feature type="region of interest" description="Disordered" evidence="2">
    <location>
        <begin position="1"/>
        <end position="21"/>
    </location>
</feature>
<feature type="strand" evidence="5">
    <location>
        <begin position="6"/>
        <end position="8"/>
    </location>
</feature>
<feature type="strand" evidence="5">
    <location>
        <begin position="13"/>
        <end position="16"/>
    </location>
</feature>
<feature type="helix" evidence="4">
    <location>
        <begin position="20"/>
        <end position="22"/>
    </location>
</feature>
<feature type="strand" evidence="5">
    <location>
        <begin position="26"/>
        <end position="29"/>
    </location>
</feature>
<feature type="strand" evidence="5">
    <location>
        <begin position="33"/>
        <end position="38"/>
    </location>
</feature>
<feature type="strand" evidence="5">
    <location>
        <begin position="40"/>
        <end position="42"/>
    </location>
</feature>
<feature type="strand" evidence="5">
    <location>
        <begin position="46"/>
        <end position="51"/>
    </location>
</feature>
<feature type="helix" evidence="5">
    <location>
        <begin position="52"/>
        <end position="60"/>
    </location>
</feature>
<reference key="1">
    <citation type="journal article" date="1996" name="Nucleic Acids Res.">
        <title>Complete sequence analysis of the genome of the bacterium Mycoplasma pneumoniae.</title>
        <authorList>
            <person name="Himmelreich R."/>
            <person name="Hilbert H."/>
            <person name="Plagens H."/>
            <person name="Pirkl E."/>
            <person name="Li B.-C."/>
            <person name="Herrmann R."/>
        </authorList>
    </citation>
    <scope>NUCLEOTIDE SEQUENCE [LARGE SCALE GENOMIC DNA]</scope>
    <source>
        <strain>ATCC 29342 / M129 / Subtype 1</strain>
    </source>
</reference>
<comment type="similarity">
    <text evidence="1">Belongs to the bacterial ribosomal protein bL28 family.</text>
</comment>
<gene>
    <name evidence="1" type="primary">rpmB</name>
    <name type="ordered locus">MPN_624</name>
    <name type="ORF">MP218</name>
</gene>